<name>SUFB_ECOLI</name>
<comment type="function">
    <text evidence="1 2">The SufBCD complex acts synergistically with SufE to stimulate the cysteine desulfurase activity of SufS. The SufBCD complex contributes to the assembly or repair of oxygen-labile iron-sulfur clusters under oxidative stress. May facilitate iron uptake from extracellular iron chelators under iron limitation.</text>
</comment>
<comment type="subunit">
    <text evidence="1 2">Part of the SufBCD complex that contains SufB, SufC and SufD (PubMed:12941942). Interacts with SufA (PubMed:19810706).</text>
</comment>
<comment type="interaction">
    <interactant intactId="EBI-562758">
        <id>P77522</id>
    </interactant>
    <interactant intactId="EBI-1125011">
        <id>P77667</id>
        <label>sufA</label>
    </interactant>
    <organismsDiffer>false</organismsDiffer>
    <experiments>5</experiments>
</comment>
<comment type="interaction">
    <interactant intactId="EBI-562758">
        <id>P77522</id>
    </interactant>
    <interactant intactId="EBI-561601">
        <id>P77499</id>
        <label>sufC</label>
    </interactant>
    <organismsDiffer>false</organismsDiffer>
    <experiments>15</experiments>
</comment>
<comment type="interaction">
    <interactant intactId="EBI-562758">
        <id>P77522</id>
    </interactant>
    <interactant intactId="EBI-562751">
        <id>P77689</id>
        <label>sufD</label>
    </interactant>
    <organismsDiffer>false</organismsDiffer>
    <experiments>15</experiments>
</comment>
<comment type="similarity">
    <text evidence="3">Belongs to the iron-sulfur cluster assembly SufBD family.</text>
</comment>
<protein>
    <recommendedName>
        <fullName>Iron-sulfur cluster assembly protein SufB</fullName>
    </recommendedName>
</protein>
<reference key="1">
    <citation type="journal article" date="1996" name="DNA Res.">
        <title>A 570-kb DNA sequence of the Escherichia coli K-12 genome corresponding to the 28.0-40.1 min region on the linkage map.</title>
        <authorList>
            <person name="Aiba H."/>
            <person name="Baba T."/>
            <person name="Fujita K."/>
            <person name="Hayashi K."/>
            <person name="Inada T."/>
            <person name="Isono K."/>
            <person name="Itoh T."/>
            <person name="Kasai H."/>
            <person name="Kashimoto K."/>
            <person name="Kimura S."/>
            <person name="Kitakawa M."/>
            <person name="Kitagawa M."/>
            <person name="Makino K."/>
            <person name="Miki T."/>
            <person name="Mizobuchi K."/>
            <person name="Mori H."/>
            <person name="Mori T."/>
            <person name="Motomura K."/>
            <person name="Nakade S."/>
            <person name="Nakamura Y."/>
            <person name="Nashimoto H."/>
            <person name="Nishio Y."/>
            <person name="Oshima T."/>
            <person name="Saito N."/>
            <person name="Sampei G."/>
            <person name="Seki Y."/>
            <person name="Sivasundaram S."/>
            <person name="Tagami H."/>
            <person name="Takeda J."/>
            <person name="Takemoto K."/>
            <person name="Takeuchi Y."/>
            <person name="Wada C."/>
            <person name="Yamamoto Y."/>
            <person name="Horiuchi T."/>
        </authorList>
    </citation>
    <scope>NUCLEOTIDE SEQUENCE [LARGE SCALE GENOMIC DNA]</scope>
    <source>
        <strain>K12 / W3110 / ATCC 27325 / DSM 5911</strain>
    </source>
</reference>
<reference key="2">
    <citation type="journal article" date="1997" name="Science">
        <title>The complete genome sequence of Escherichia coli K-12.</title>
        <authorList>
            <person name="Blattner F.R."/>
            <person name="Plunkett G. III"/>
            <person name="Bloch C.A."/>
            <person name="Perna N.T."/>
            <person name="Burland V."/>
            <person name="Riley M."/>
            <person name="Collado-Vides J."/>
            <person name="Glasner J.D."/>
            <person name="Rode C.K."/>
            <person name="Mayhew G.F."/>
            <person name="Gregor J."/>
            <person name="Davis N.W."/>
            <person name="Kirkpatrick H.A."/>
            <person name="Goeden M.A."/>
            <person name="Rose D.J."/>
            <person name="Mau B."/>
            <person name="Shao Y."/>
        </authorList>
    </citation>
    <scope>NUCLEOTIDE SEQUENCE [LARGE SCALE GENOMIC DNA]</scope>
    <source>
        <strain>K12 / MG1655 / ATCC 47076</strain>
    </source>
</reference>
<reference key="3">
    <citation type="journal article" date="2006" name="Mol. Syst. Biol.">
        <title>Highly accurate genome sequences of Escherichia coli K-12 strains MG1655 and W3110.</title>
        <authorList>
            <person name="Hayashi K."/>
            <person name="Morooka N."/>
            <person name="Yamamoto Y."/>
            <person name="Fujita K."/>
            <person name="Isono K."/>
            <person name="Choi S."/>
            <person name="Ohtsubo E."/>
            <person name="Baba T."/>
            <person name="Wanner B.L."/>
            <person name="Mori H."/>
            <person name="Horiuchi T."/>
        </authorList>
    </citation>
    <scope>NUCLEOTIDE SEQUENCE [LARGE SCALE GENOMIC DNA]</scope>
    <source>
        <strain>K12 / W3110 / ATCC 27325 / DSM 5911</strain>
    </source>
</reference>
<reference key="4">
    <citation type="journal article" date="1999" name="J. Bacteriol.">
        <title>SufS is a NifS-like protein, and SufD is necessary for stability of the 2Fe-2S FhuF protein in Escherichia coli.</title>
        <authorList>
            <person name="Patzer S.I."/>
            <person name="Hantke K."/>
        </authorList>
    </citation>
    <scope>GENE NAME</scope>
    <source>
        <strain>K12 / MG1655 / ATCC 47076</strain>
    </source>
</reference>
<reference key="5">
    <citation type="journal article" date="2003" name="J. Biol. Chem.">
        <title>The SufE protein and the SufBCD complex enhance SufS cysteine desulfurase activity as part of a sulfur transfer pathway for Fe-S cluster assembly in Escherichia coli.</title>
        <authorList>
            <person name="Outten F.W."/>
            <person name="Wood M.J."/>
            <person name="Munoz F.M."/>
            <person name="Storz G."/>
        </authorList>
    </citation>
    <scope>FUNCTION</scope>
    <scope>SUBUNIT</scope>
</reference>
<reference key="6">
    <citation type="journal article" date="2009" name="Biochemistry">
        <title>The SufBCD Fe-S scaffold complex interacts with SufA for Fe-S cluster transfer.</title>
        <authorList>
            <person name="Chahal H.K."/>
            <person name="Dai Y."/>
            <person name="Saini A."/>
            <person name="Ayala-Castro C."/>
            <person name="Outten F.W."/>
        </authorList>
    </citation>
    <scope>FUNCTION</scope>
    <scope>INTERACTION WITH SUFA</scope>
</reference>
<sequence length="495" mass="54745">MSRNTEATDDVKTWTGGPLNYKEGFFTQLATDELAKGINEEVVRAISAKRNEPEWMLEFRLNAYRAWLEMEEPHWLKAHYDKLNYQDYSYYSAPSCGNCDDTCASEPGAVQQTGANAFLSKEVEAAFEQLGVPVREGKEVAVDAIFDSVSVATTYREKLAEQGIIFCSFGEAIHDHPELVRKYLGTVVPGNDNFFAALNAAVASDGTFIYVPKGVRCPMELSTYFRINAEKTGQFERTILVADEDSYVSYIEGCSAPVRDSYQLHAAVVEVIIHKNAEVKYSTVQNWFPGDNNTGGILNFVTKRALCEGENSKMSWTQSETGSAITWKYPSCILRGDNSIGEFYSVALTSGHQQADTGTKMIHIGKNTKSTIISKGISAGHSQNSYRGLVKIMPTATNARNFTQCDSMLIGANCGAHTFPYVECRNNSAQLEHEATTSRIGEDQLFYCLQRGISEEDAISMIVNGFCKDVFSELPLEFAVEAQKLLAISLEHSVG</sequence>
<gene>
    <name type="primary">sufB</name>
    <name type="synonym">ynhE</name>
    <name type="ordered locus">b1683</name>
    <name type="ordered locus">JW5273</name>
</gene>
<organism>
    <name type="scientific">Escherichia coli (strain K12)</name>
    <dbReference type="NCBI Taxonomy" id="83333"/>
    <lineage>
        <taxon>Bacteria</taxon>
        <taxon>Pseudomonadati</taxon>
        <taxon>Pseudomonadota</taxon>
        <taxon>Gammaproteobacteria</taxon>
        <taxon>Enterobacterales</taxon>
        <taxon>Enterobacteriaceae</taxon>
        <taxon>Escherichia</taxon>
    </lineage>
</organism>
<proteinExistence type="evidence at protein level"/>
<accession>P77522</accession>
<evidence type="ECO:0000269" key="1">
    <source>
    </source>
</evidence>
<evidence type="ECO:0000269" key="2">
    <source>
    </source>
</evidence>
<evidence type="ECO:0000305" key="3"/>
<evidence type="ECO:0007829" key="4">
    <source>
        <dbReference type="PDB" id="5AWF"/>
    </source>
</evidence>
<feature type="chain" id="PRO_0000147373" description="Iron-sulfur cluster assembly protein SufB">
    <location>
        <begin position="1"/>
        <end position="495"/>
    </location>
</feature>
<feature type="helix" evidence="4">
    <location>
        <begin position="40"/>
        <end position="46"/>
    </location>
</feature>
<feature type="helix" evidence="4">
    <location>
        <begin position="54"/>
        <end position="69"/>
    </location>
</feature>
<feature type="strand" evidence="4">
    <location>
        <begin position="165"/>
        <end position="168"/>
    </location>
</feature>
<feature type="helix" evidence="4">
    <location>
        <begin position="169"/>
        <end position="175"/>
    </location>
</feature>
<feature type="helix" evidence="4">
    <location>
        <begin position="177"/>
        <end position="183"/>
    </location>
</feature>
<feature type="strand" evidence="4">
    <location>
        <begin position="186"/>
        <end position="188"/>
    </location>
</feature>
<feature type="helix" evidence="4">
    <location>
        <begin position="194"/>
        <end position="200"/>
    </location>
</feature>
<feature type="strand" evidence="4">
    <location>
        <begin position="206"/>
        <end position="211"/>
    </location>
</feature>
<feature type="strand" evidence="4">
    <location>
        <begin position="234"/>
        <end position="242"/>
    </location>
</feature>
<feature type="strand" evidence="4">
    <location>
        <begin position="247"/>
        <end position="257"/>
    </location>
</feature>
<feature type="strand" evidence="4">
    <location>
        <begin position="264"/>
        <end position="273"/>
    </location>
</feature>
<feature type="strand" evidence="4">
    <location>
        <begin position="278"/>
        <end position="288"/>
    </location>
</feature>
<feature type="turn" evidence="4">
    <location>
        <begin position="290"/>
        <end position="292"/>
    </location>
</feature>
<feature type="strand" evidence="4">
    <location>
        <begin position="298"/>
        <end position="307"/>
    </location>
</feature>
<feature type="strand" evidence="4">
    <location>
        <begin position="313"/>
        <end position="321"/>
    </location>
</feature>
<feature type="strand" evidence="4">
    <location>
        <begin position="324"/>
        <end position="328"/>
    </location>
</feature>
<feature type="strand" evidence="4">
    <location>
        <begin position="331"/>
        <end position="334"/>
    </location>
</feature>
<feature type="strand" evidence="4">
    <location>
        <begin position="340"/>
        <end position="349"/>
    </location>
</feature>
<feature type="strand" evidence="4">
    <location>
        <begin position="354"/>
        <end position="357"/>
    </location>
</feature>
<feature type="strand" evidence="4">
    <location>
        <begin position="360"/>
        <end position="363"/>
    </location>
</feature>
<feature type="strand" evidence="4">
    <location>
        <begin position="369"/>
        <end position="379"/>
    </location>
</feature>
<feature type="strand" evidence="4">
    <location>
        <begin position="383"/>
        <end position="392"/>
    </location>
</feature>
<feature type="strand" evidence="4">
    <location>
        <begin position="400"/>
        <end position="413"/>
    </location>
</feature>
<feature type="strand" evidence="4">
    <location>
        <begin position="415"/>
        <end position="424"/>
    </location>
</feature>
<feature type="strand" evidence="4">
    <location>
        <begin position="430"/>
        <end position="439"/>
    </location>
</feature>
<feature type="helix" evidence="4">
    <location>
        <begin position="442"/>
        <end position="450"/>
    </location>
</feature>
<feature type="helix" evidence="4">
    <location>
        <begin position="455"/>
        <end position="466"/>
    </location>
</feature>
<feature type="helix" evidence="4">
    <location>
        <begin position="468"/>
        <end position="471"/>
    </location>
</feature>
<feature type="helix" evidence="4">
    <location>
        <begin position="476"/>
        <end position="493"/>
    </location>
</feature>
<keyword id="KW-0002">3D-structure</keyword>
<keyword id="KW-1185">Reference proteome</keyword>
<dbReference type="EMBL" id="U00096">
    <property type="protein sequence ID" value="AAC74753.2"/>
    <property type="molecule type" value="Genomic_DNA"/>
</dbReference>
<dbReference type="EMBL" id="AP009048">
    <property type="protein sequence ID" value="BAA15454.2"/>
    <property type="molecule type" value="Genomic_DNA"/>
</dbReference>
<dbReference type="PIR" id="C64926">
    <property type="entry name" value="C64926"/>
</dbReference>
<dbReference type="RefSeq" id="NP_416198.2">
    <property type="nucleotide sequence ID" value="NC_000913.3"/>
</dbReference>
<dbReference type="RefSeq" id="WP_000089364.1">
    <property type="nucleotide sequence ID" value="NZ_STEB01000003.1"/>
</dbReference>
<dbReference type="PDB" id="5AWF">
    <property type="method" value="X-ray"/>
    <property type="resolution" value="2.96 A"/>
    <property type="chains" value="A/E=1-495"/>
</dbReference>
<dbReference type="PDB" id="5AWG">
    <property type="method" value="X-ray"/>
    <property type="resolution" value="4.28 A"/>
    <property type="chains" value="A/E=1-495"/>
</dbReference>
<dbReference type="PDBsum" id="5AWF"/>
<dbReference type="PDBsum" id="5AWG"/>
<dbReference type="SMR" id="P77522"/>
<dbReference type="BioGRID" id="4260282">
    <property type="interactions" value="72"/>
</dbReference>
<dbReference type="BioGRID" id="850120">
    <property type="interactions" value="1"/>
</dbReference>
<dbReference type="ComplexPortal" id="CPX-2123">
    <property type="entry name" value="sufBCD complex"/>
</dbReference>
<dbReference type="DIP" id="DIP-10938N"/>
<dbReference type="FunCoup" id="P77522">
    <property type="interactions" value="526"/>
</dbReference>
<dbReference type="IntAct" id="P77522">
    <property type="interactions" value="5"/>
</dbReference>
<dbReference type="STRING" id="511145.b1683"/>
<dbReference type="jPOST" id="P77522"/>
<dbReference type="PaxDb" id="511145-b1683"/>
<dbReference type="DNASU" id="945753"/>
<dbReference type="EnsemblBacteria" id="AAC74753">
    <property type="protein sequence ID" value="AAC74753"/>
    <property type="gene ID" value="b1683"/>
</dbReference>
<dbReference type="GeneID" id="93775838"/>
<dbReference type="GeneID" id="945753"/>
<dbReference type="KEGG" id="ecj:JW5273"/>
<dbReference type="KEGG" id="eco:b1683"/>
<dbReference type="KEGG" id="ecoc:C3026_09640"/>
<dbReference type="PATRIC" id="fig|1411691.4.peg.575"/>
<dbReference type="EchoBASE" id="EB3723"/>
<dbReference type="eggNOG" id="COG0719">
    <property type="taxonomic scope" value="Bacteria"/>
</dbReference>
<dbReference type="HOGENOM" id="CLU_026231_0_0_6"/>
<dbReference type="InParanoid" id="P77522"/>
<dbReference type="OMA" id="YYSAPKQ"/>
<dbReference type="OrthoDB" id="9803529at2"/>
<dbReference type="PhylomeDB" id="P77522"/>
<dbReference type="BioCyc" id="EcoCyc:G6909-MONOMER"/>
<dbReference type="EvolutionaryTrace" id="P77522"/>
<dbReference type="PRO" id="PR:P77522"/>
<dbReference type="Proteomes" id="UP000000625">
    <property type="component" value="Chromosome"/>
</dbReference>
<dbReference type="GO" id="GO:1990229">
    <property type="term" value="C:iron-sulfur cluster assembly complex"/>
    <property type="evidence" value="ECO:0000314"/>
    <property type="project" value="EcoCyc"/>
</dbReference>
<dbReference type="GO" id="GO:0051537">
    <property type="term" value="F:2 iron, 2 sulfur cluster binding"/>
    <property type="evidence" value="ECO:0000314"/>
    <property type="project" value="EcoCyc"/>
</dbReference>
<dbReference type="GO" id="GO:0051539">
    <property type="term" value="F:4 iron, 4 sulfur cluster binding"/>
    <property type="evidence" value="ECO:0000314"/>
    <property type="project" value="EcoCyc"/>
</dbReference>
<dbReference type="GO" id="GO:0016226">
    <property type="term" value="P:iron-sulfur cluster assembly"/>
    <property type="evidence" value="ECO:0000315"/>
    <property type="project" value="EcoCyc"/>
</dbReference>
<dbReference type="DisProt" id="DP01920"/>
<dbReference type="InterPro" id="IPR055346">
    <property type="entry name" value="Fe-S_cluster_assembly_SufBD"/>
</dbReference>
<dbReference type="InterPro" id="IPR010231">
    <property type="entry name" value="SUF_FeS_clus_asmbl_SufB"/>
</dbReference>
<dbReference type="InterPro" id="IPR000825">
    <property type="entry name" value="SUF_FeS_clus_asmbl_SufBD_core"/>
</dbReference>
<dbReference type="InterPro" id="IPR037284">
    <property type="entry name" value="SUF_FeS_clus_asmbl_SufBD_sf"/>
</dbReference>
<dbReference type="InterPro" id="IPR045595">
    <property type="entry name" value="SufBD_N"/>
</dbReference>
<dbReference type="NCBIfam" id="NF008773">
    <property type="entry name" value="PRK11814.1"/>
    <property type="match status" value="1"/>
</dbReference>
<dbReference type="NCBIfam" id="TIGR01980">
    <property type="entry name" value="sufB"/>
    <property type="match status" value="1"/>
</dbReference>
<dbReference type="PANTHER" id="PTHR30508">
    <property type="entry name" value="FES CLUSTER ASSEMBLY PROTEIN SUF"/>
    <property type="match status" value="1"/>
</dbReference>
<dbReference type="PANTHER" id="PTHR30508:SF1">
    <property type="entry name" value="UPF0051 PROTEIN ABCI8, CHLOROPLASTIC-RELATED"/>
    <property type="match status" value="1"/>
</dbReference>
<dbReference type="Pfam" id="PF01458">
    <property type="entry name" value="SUFBD_core"/>
    <property type="match status" value="1"/>
</dbReference>
<dbReference type="Pfam" id="PF19295">
    <property type="entry name" value="SufBD_N"/>
    <property type="match status" value="1"/>
</dbReference>
<dbReference type="SUPFAM" id="SSF101960">
    <property type="entry name" value="Stabilizer of iron transporter SufD"/>
    <property type="match status" value="1"/>
</dbReference>